<comment type="function">
    <text evidence="1">One of the primary rRNA binding proteins, it binds directly to 16S rRNA where it nucleates assembly of the head domain of the 30S subunit. Is located at the subunit interface close to the decoding center, probably blocks exit of the E-site tRNA.</text>
</comment>
<comment type="subunit">
    <text evidence="1">Part of the 30S ribosomal subunit. Contacts proteins S9 and S11.</text>
</comment>
<comment type="similarity">
    <text evidence="1">Belongs to the universal ribosomal protein uS7 family.</text>
</comment>
<protein>
    <recommendedName>
        <fullName evidence="1">Small ribosomal subunit protein uS7A</fullName>
    </recommendedName>
    <alternativeName>
        <fullName evidence="2">30S ribosomal protein S7 1</fullName>
    </alternativeName>
</protein>
<name>RS7A_AQUAE</name>
<sequence>MPRKGPVPPREIPPDPKYGDVLVQKLINKVMKDGKKSVAEWIVYTALEEAAKEVNMHPVELLHKVIEKLKPEWEVRPTRVGGATYQVPIEVPERRQISLAIKWLVQAARERPRGREQYTMIERLKAELLDALNERGGAYKKKEETHRMAHANMVFSHFRW</sequence>
<keyword id="KW-1185">Reference proteome</keyword>
<keyword id="KW-0687">Ribonucleoprotein</keyword>
<keyword id="KW-0689">Ribosomal protein</keyword>
<keyword id="KW-0694">RNA-binding</keyword>
<keyword id="KW-0699">rRNA-binding</keyword>
<keyword id="KW-0820">tRNA-binding</keyword>
<dbReference type="EMBL" id="AE000657">
    <property type="protein sequence ID" value="AAC07654.1"/>
    <property type="molecule type" value="Genomic_DNA"/>
</dbReference>
<dbReference type="PIR" id="G70457">
    <property type="entry name" value="G70457"/>
</dbReference>
<dbReference type="RefSeq" id="NP_214256.1">
    <property type="nucleotide sequence ID" value="NC_000918.1"/>
</dbReference>
<dbReference type="RefSeq" id="WP_010881193.1">
    <property type="nucleotide sequence ID" value="NC_000918.1"/>
</dbReference>
<dbReference type="SMR" id="O67690"/>
<dbReference type="FunCoup" id="O67690">
    <property type="interactions" value="525"/>
</dbReference>
<dbReference type="STRING" id="224324.aq_1832"/>
<dbReference type="EnsemblBacteria" id="AAC07654">
    <property type="protein sequence ID" value="AAC07654"/>
    <property type="gene ID" value="aq_1832"/>
</dbReference>
<dbReference type="KEGG" id="aae:aq_1832"/>
<dbReference type="PATRIC" id="fig|224324.8.peg.1414"/>
<dbReference type="eggNOG" id="COG0049">
    <property type="taxonomic scope" value="Bacteria"/>
</dbReference>
<dbReference type="HOGENOM" id="CLU_072226_1_1_0"/>
<dbReference type="InParanoid" id="O67690"/>
<dbReference type="OrthoDB" id="9807653at2"/>
<dbReference type="Proteomes" id="UP000000798">
    <property type="component" value="Chromosome"/>
</dbReference>
<dbReference type="GO" id="GO:0022627">
    <property type="term" value="C:cytosolic small ribosomal subunit"/>
    <property type="evidence" value="ECO:0000318"/>
    <property type="project" value="GO_Central"/>
</dbReference>
<dbReference type="GO" id="GO:0005840">
    <property type="term" value="C:ribosome"/>
    <property type="evidence" value="ECO:0000318"/>
    <property type="project" value="GO_Central"/>
</dbReference>
<dbReference type="GO" id="GO:0003729">
    <property type="term" value="F:mRNA binding"/>
    <property type="evidence" value="ECO:0000318"/>
    <property type="project" value="GO_Central"/>
</dbReference>
<dbReference type="GO" id="GO:0019843">
    <property type="term" value="F:rRNA binding"/>
    <property type="evidence" value="ECO:0000318"/>
    <property type="project" value="GO_Central"/>
</dbReference>
<dbReference type="GO" id="GO:0003735">
    <property type="term" value="F:structural constituent of ribosome"/>
    <property type="evidence" value="ECO:0000318"/>
    <property type="project" value="GO_Central"/>
</dbReference>
<dbReference type="GO" id="GO:0000049">
    <property type="term" value="F:tRNA binding"/>
    <property type="evidence" value="ECO:0007669"/>
    <property type="project" value="UniProtKB-UniRule"/>
</dbReference>
<dbReference type="GO" id="GO:0000028">
    <property type="term" value="P:ribosomal small subunit assembly"/>
    <property type="evidence" value="ECO:0000318"/>
    <property type="project" value="GO_Central"/>
</dbReference>
<dbReference type="GO" id="GO:0006412">
    <property type="term" value="P:translation"/>
    <property type="evidence" value="ECO:0000318"/>
    <property type="project" value="GO_Central"/>
</dbReference>
<dbReference type="CDD" id="cd14869">
    <property type="entry name" value="uS7_Bacteria"/>
    <property type="match status" value="1"/>
</dbReference>
<dbReference type="FunFam" id="1.10.455.10:FF:000001">
    <property type="entry name" value="30S ribosomal protein S7"/>
    <property type="match status" value="1"/>
</dbReference>
<dbReference type="Gene3D" id="1.10.455.10">
    <property type="entry name" value="Ribosomal protein S7 domain"/>
    <property type="match status" value="1"/>
</dbReference>
<dbReference type="HAMAP" id="MF_00480_B">
    <property type="entry name" value="Ribosomal_uS7_B"/>
    <property type="match status" value="1"/>
</dbReference>
<dbReference type="InterPro" id="IPR000235">
    <property type="entry name" value="Ribosomal_uS7"/>
</dbReference>
<dbReference type="InterPro" id="IPR005717">
    <property type="entry name" value="Ribosomal_uS7_bac/org-type"/>
</dbReference>
<dbReference type="InterPro" id="IPR020606">
    <property type="entry name" value="Ribosomal_uS7_CS"/>
</dbReference>
<dbReference type="InterPro" id="IPR023798">
    <property type="entry name" value="Ribosomal_uS7_dom"/>
</dbReference>
<dbReference type="InterPro" id="IPR036823">
    <property type="entry name" value="Ribosomal_uS7_dom_sf"/>
</dbReference>
<dbReference type="NCBIfam" id="TIGR01029">
    <property type="entry name" value="rpsG_bact"/>
    <property type="match status" value="1"/>
</dbReference>
<dbReference type="PANTHER" id="PTHR11205">
    <property type="entry name" value="RIBOSOMAL PROTEIN S7"/>
    <property type="match status" value="1"/>
</dbReference>
<dbReference type="Pfam" id="PF00177">
    <property type="entry name" value="Ribosomal_S7"/>
    <property type="match status" value="1"/>
</dbReference>
<dbReference type="PIRSF" id="PIRSF002122">
    <property type="entry name" value="RPS7p_RPS7a_RPS5e_RPS7o"/>
    <property type="match status" value="1"/>
</dbReference>
<dbReference type="SUPFAM" id="SSF47973">
    <property type="entry name" value="Ribosomal protein S7"/>
    <property type="match status" value="1"/>
</dbReference>
<dbReference type="PROSITE" id="PS00052">
    <property type="entry name" value="RIBOSOMAL_S7"/>
    <property type="match status" value="1"/>
</dbReference>
<accession>O67690</accession>
<proteinExistence type="inferred from homology"/>
<evidence type="ECO:0000255" key="1">
    <source>
        <dbReference type="HAMAP-Rule" id="MF_00480"/>
    </source>
</evidence>
<evidence type="ECO:0000305" key="2"/>
<feature type="chain" id="PRO_0000124207" description="Small ribosomal subunit protein uS7A">
    <location>
        <begin position="1"/>
        <end position="160"/>
    </location>
</feature>
<organism>
    <name type="scientific">Aquifex aeolicus (strain VF5)</name>
    <dbReference type="NCBI Taxonomy" id="224324"/>
    <lineage>
        <taxon>Bacteria</taxon>
        <taxon>Pseudomonadati</taxon>
        <taxon>Aquificota</taxon>
        <taxon>Aquificia</taxon>
        <taxon>Aquificales</taxon>
        <taxon>Aquificaceae</taxon>
        <taxon>Aquifex</taxon>
    </lineage>
</organism>
<gene>
    <name evidence="1" type="primary">rpsG1</name>
    <name type="ordered locus">aq_1832</name>
</gene>
<reference key="1">
    <citation type="journal article" date="1998" name="Nature">
        <title>The complete genome of the hyperthermophilic bacterium Aquifex aeolicus.</title>
        <authorList>
            <person name="Deckert G."/>
            <person name="Warren P.V."/>
            <person name="Gaasterland T."/>
            <person name="Young W.G."/>
            <person name="Lenox A.L."/>
            <person name="Graham D.E."/>
            <person name="Overbeek R."/>
            <person name="Snead M.A."/>
            <person name="Keller M."/>
            <person name="Aujay M."/>
            <person name="Huber R."/>
            <person name="Feldman R.A."/>
            <person name="Short J.M."/>
            <person name="Olsen G.J."/>
            <person name="Swanson R.V."/>
        </authorList>
    </citation>
    <scope>NUCLEOTIDE SEQUENCE [LARGE SCALE GENOMIC DNA]</scope>
    <source>
        <strain>VF5</strain>
    </source>
</reference>